<gene>
    <name evidence="1" type="primary">msrA</name>
    <name type="ordered locus">MAP_3554c</name>
</gene>
<sequence length="171" mass="19316">MTNTQKAILAGGCFWGMQELIRKQPGVVSTRVGYTGGDVPNATYRNHGTHAEAVEIIYDPAVTDYRQILEFFFQIHDPTTKDRQGNDRGPSYRSAIFYTDDEQKRIALDTIADVEASGLWPGKVVTEVSPAGDFWEAEPEHQDYLQRYPNGYTCHYIRPGWKLPRRATSGS</sequence>
<name>MSRA_MYCPA</name>
<accession>Q73U14</accession>
<reference key="1">
    <citation type="journal article" date="2005" name="Proc. Natl. Acad. Sci. U.S.A.">
        <title>The complete genome sequence of Mycobacterium avium subspecies paratuberculosis.</title>
        <authorList>
            <person name="Li L."/>
            <person name="Bannantine J.P."/>
            <person name="Zhang Q."/>
            <person name="Amonsin A."/>
            <person name="May B.J."/>
            <person name="Alt D."/>
            <person name="Banerji N."/>
            <person name="Kanjilal S."/>
            <person name="Kapur V."/>
        </authorList>
    </citation>
    <scope>NUCLEOTIDE SEQUENCE [LARGE SCALE GENOMIC DNA]</scope>
    <source>
        <strain>ATCC BAA-968 / K-10</strain>
    </source>
</reference>
<proteinExistence type="inferred from homology"/>
<organism>
    <name type="scientific">Mycolicibacterium paratuberculosis (strain ATCC BAA-968 / K-10)</name>
    <name type="common">Mycobacterium paratuberculosis</name>
    <dbReference type="NCBI Taxonomy" id="262316"/>
    <lineage>
        <taxon>Bacteria</taxon>
        <taxon>Bacillati</taxon>
        <taxon>Actinomycetota</taxon>
        <taxon>Actinomycetes</taxon>
        <taxon>Mycobacteriales</taxon>
        <taxon>Mycobacteriaceae</taxon>
        <taxon>Mycobacterium</taxon>
        <taxon>Mycobacterium avium complex (MAC)</taxon>
    </lineage>
</organism>
<dbReference type="EC" id="1.8.4.11" evidence="1"/>
<dbReference type="EMBL" id="AE016958">
    <property type="protein sequence ID" value="AAS06104.1"/>
    <property type="molecule type" value="Genomic_DNA"/>
</dbReference>
<dbReference type="RefSeq" id="WP_003874215.1">
    <property type="nucleotide sequence ID" value="NZ_CP106873.1"/>
</dbReference>
<dbReference type="SMR" id="Q73U14"/>
<dbReference type="STRING" id="262316.MAP_3554c"/>
<dbReference type="GeneID" id="75272592"/>
<dbReference type="KEGG" id="mpa:MAP_3554c"/>
<dbReference type="eggNOG" id="COG0225">
    <property type="taxonomic scope" value="Bacteria"/>
</dbReference>
<dbReference type="HOGENOM" id="CLU_031040_10_2_11"/>
<dbReference type="Proteomes" id="UP000000580">
    <property type="component" value="Chromosome"/>
</dbReference>
<dbReference type="GO" id="GO:0033744">
    <property type="term" value="F:L-methionine:thioredoxin-disulfide S-oxidoreductase activity"/>
    <property type="evidence" value="ECO:0007669"/>
    <property type="project" value="RHEA"/>
</dbReference>
<dbReference type="GO" id="GO:0008113">
    <property type="term" value="F:peptide-methionine (S)-S-oxide reductase activity"/>
    <property type="evidence" value="ECO:0007669"/>
    <property type="project" value="UniProtKB-UniRule"/>
</dbReference>
<dbReference type="GO" id="GO:0036211">
    <property type="term" value="P:protein modification process"/>
    <property type="evidence" value="ECO:0007669"/>
    <property type="project" value="UniProtKB-UniRule"/>
</dbReference>
<dbReference type="FunFam" id="3.30.1060.10:FF:000005">
    <property type="entry name" value="Peptide methionine sulfoxide reductase MsrA"/>
    <property type="match status" value="1"/>
</dbReference>
<dbReference type="Gene3D" id="3.30.1060.10">
    <property type="entry name" value="Peptide methionine sulphoxide reductase MsrA"/>
    <property type="match status" value="1"/>
</dbReference>
<dbReference type="HAMAP" id="MF_01401">
    <property type="entry name" value="MsrA"/>
    <property type="match status" value="1"/>
</dbReference>
<dbReference type="InterPro" id="IPR002569">
    <property type="entry name" value="Met_Sox_Rdtase_MsrA_dom"/>
</dbReference>
<dbReference type="InterPro" id="IPR036509">
    <property type="entry name" value="Met_Sox_Rdtase_MsrA_sf"/>
</dbReference>
<dbReference type="NCBIfam" id="TIGR00401">
    <property type="entry name" value="msrA"/>
    <property type="match status" value="1"/>
</dbReference>
<dbReference type="PANTHER" id="PTHR43774">
    <property type="entry name" value="PEPTIDE METHIONINE SULFOXIDE REDUCTASE"/>
    <property type="match status" value="1"/>
</dbReference>
<dbReference type="PANTHER" id="PTHR43774:SF1">
    <property type="entry name" value="PEPTIDE METHIONINE SULFOXIDE REDUCTASE MSRA 2"/>
    <property type="match status" value="1"/>
</dbReference>
<dbReference type="Pfam" id="PF01625">
    <property type="entry name" value="PMSR"/>
    <property type="match status" value="1"/>
</dbReference>
<dbReference type="SUPFAM" id="SSF55068">
    <property type="entry name" value="Peptide methionine sulfoxide reductase"/>
    <property type="match status" value="1"/>
</dbReference>
<evidence type="ECO:0000255" key="1">
    <source>
        <dbReference type="HAMAP-Rule" id="MF_01401"/>
    </source>
</evidence>
<feature type="chain" id="PRO_1000068343" description="Peptide methionine sulfoxide reductase MsrA">
    <location>
        <begin position="1"/>
        <end position="171"/>
    </location>
</feature>
<feature type="active site" evidence="1">
    <location>
        <position position="13"/>
    </location>
</feature>
<comment type="function">
    <text evidence="1">Has an important function as a repair enzyme for proteins that have been inactivated by oxidation. Catalyzes the reversible oxidation-reduction of methionine sulfoxide in proteins to methionine.</text>
</comment>
<comment type="catalytic activity">
    <reaction evidence="1">
        <text>L-methionyl-[protein] + [thioredoxin]-disulfide + H2O = L-methionyl-(S)-S-oxide-[protein] + [thioredoxin]-dithiol</text>
        <dbReference type="Rhea" id="RHEA:14217"/>
        <dbReference type="Rhea" id="RHEA-COMP:10698"/>
        <dbReference type="Rhea" id="RHEA-COMP:10700"/>
        <dbReference type="Rhea" id="RHEA-COMP:12313"/>
        <dbReference type="Rhea" id="RHEA-COMP:12315"/>
        <dbReference type="ChEBI" id="CHEBI:15377"/>
        <dbReference type="ChEBI" id="CHEBI:16044"/>
        <dbReference type="ChEBI" id="CHEBI:29950"/>
        <dbReference type="ChEBI" id="CHEBI:44120"/>
        <dbReference type="ChEBI" id="CHEBI:50058"/>
        <dbReference type="EC" id="1.8.4.11"/>
    </reaction>
</comment>
<comment type="catalytic activity">
    <reaction evidence="1">
        <text>[thioredoxin]-disulfide + L-methionine + H2O = L-methionine (S)-S-oxide + [thioredoxin]-dithiol</text>
        <dbReference type="Rhea" id="RHEA:19993"/>
        <dbReference type="Rhea" id="RHEA-COMP:10698"/>
        <dbReference type="Rhea" id="RHEA-COMP:10700"/>
        <dbReference type="ChEBI" id="CHEBI:15377"/>
        <dbReference type="ChEBI" id="CHEBI:29950"/>
        <dbReference type="ChEBI" id="CHEBI:50058"/>
        <dbReference type="ChEBI" id="CHEBI:57844"/>
        <dbReference type="ChEBI" id="CHEBI:58772"/>
        <dbReference type="EC" id="1.8.4.11"/>
    </reaction>
</comment>
<comment type="similarity">
    <text evidence="1">Belongs to the MsrA Met sulfoxide reductase family.</text>
</comment>
<keyword id="KW-0560">Oxidoreductase</keyword>
<keyword id="KW-1185">Reference proteome</keyword>
<protein>
    <recommendedName>
        <fullName evidence="1">Peptide methionine sulfoxide reductase MsrA</fullName>
        <shortName evidence="1">Protein-methionine-S-oxide reductase</shortName>
        <ecNumber evidence="1">1.8.4.11</ecNumber>
    </recommendedName>
    <alternativeName>
        <fullName evidence="1">Peptide-methionine (S)-S-oxide reductase</fullName>
        <shortName evidence="1">Peptide Met(O) reductase</shortName>
    </alternativeName>
</protein>